<protein>
    <recommendedName>
        <fullName>Probable phosphoenolpyruvate synthase</fullName>
        <shortName>PEP synthase</shortName>
        <ecNumber>2.7.9.2</ecNumber>
    </recommendedName>
    <alternativeName>
        <fullName>Pyruvate, water dikinase</fullName>
    </alternativeName>
</protein>
<proteinExistence type="inferred from homology"/>
<reference key="1">
    <citation type="journal article" date="1997" name="J. Bacteriol.">
        <title>Complete genome sequence of Methanobacterium thermoautotrophicum deltaH: functional analysis and comparative genomics.</title>
        <authorList>
            <person name="Smith D.R."/>
            <person name="Doucette-Stamm L.A."/>
            <person name="Deloughery C."/>
            <person name="Lee H.-M."/>
            <person name="Dubois J."/>
            <person name="Aldredge T."/>
            <person name="Bashirzadeh R."/>
            <person name="Blakely D."/>
            <person name="Cook R."/>
            <person name="Gilbert K."/>
            <person name="Harrison D."/>
            <person name="Hoang L."/>
            <person name="Keagle P."/>
            <person name="Lumm W."/>
            <person name="Pothier B."/>
            <person name="Qiu D."/>
            <person name="Spadafora R."/>
            <person name="Vicare R."/>
            <person name="Wang Y."/>
            <person name="Wierzbowski J."/>
            <person name="Gibson R."/>
            <person name="Jiwani N."/>
            <person name="Caruso A."/>
            <person name="Bush D."/>
            <person name="Safer H."/>
            <person name="Patwell D."/>
            <person name="Prabhakar S."/>
            <person name="McDougall S."/>
            <person name="Shimer G."/>
            <person name="Goyal A."/>
            <person name="Pietrovski S."/>
            <person name="Church G.M."/>
            <person name="Daniels C.J."/>
            <person name="Mao J.-I."/>
            <person name="Rice P."/>
            <person name="Noelling J."/>
            <person name="Reeve J.N."/>
        </authorList>
    </citation>
    <scope>NUCLEOTIDE SEQUENCE [LARGE SCALE GENOMIC DNA]</scope>
    <source>
        <strain>ATCC 29096 / DSM 1053 / JCM 10044 / NBRC 100330 / Delta H</strain>
    </source>
</reference>
<accession>O27190</accession>
<dbReference type="EC" id="2.7.9.2"/>
<dbReference type="EMBL" id="AE000666">
    <property type="protein sequence ID" value="AAB85607.1"/>
    <property type="molecule type" value="Genomic_DNA"/>
</dbReference>
<dbReference type="PIR" id="G69015">
    <property type="entry name" value="G69015"/>
</dbReference>
<dbReference type="SMR" id="O27190"/>
<dbReference type="FunCoup" id="O27190">
    <property type="interactions" value="69"/>
</dbReference>
<dbReference type="STRING" id="187420.MTH_1118"/>
<dbReference type="PaxDb" id="187420-MTH_1118"/>
<dbReference type="EnsemblBacteria" id="AAB85607">
    <property type="protein sequence ID" value="AAB85607"/>
    <property type="gene ID" value="MTH_1118"/>
</dbReference>
<dbReference type="KEGG" id="mth:MTH_1118"/>
<dbReference type="PATRIC" id="fig|187420.15.peg.1094"/>
<dbReference type="HOGENOM" id="CLU_007308_6_2_2"/>
<dbReference type="InParanoid" id="O27190"/>
<dbReference type="UniPathway" id="UPA00138"/>
<dbReference type="Proteomes" id="UP000005223">
    <property type="component" value="Chromosome"/>
</dbReference>
<dbReference type="GO" id="GO:0005524">
    <property type="term" value="F:ATP binding"/>
    <property type="evidence" value="ECO:0007669"/>
    <property type="project" value="UniProtKB-KW"/>
</dbReference>
<dbReference type="GO" id="GO:0046872">
    <property type="term" value="F:metal ion binding"/>
    <property type="evidence" value="ECO:0007669"/>
    <property type="project" value="UniProtKB-KW"/>
</dbReference>
<dbReference type="GO" id="GO:0008986">
    <property type="term" value="F:pyruvate, water dikinase activity"/>
    <property type="evidence" value="ECO:0007669"/>
    <property type="project" value="UniProtKB-EC"/>
</dbReference>
<dbReference type="GO" id="GO:0006094">
    <property type="term" value="P:gluconeogenesis"/>
    <property type="evidence" value="ECO:0007669"/>
    <property type="project" value="UniProtKB-UniPathway"/>
</dbReference>
<dbReference type="FunFam" id="3.30.1490.20:FF:000010">
    <property type="entry name" value="Phosphoenolpyruvate synthase"/>
    <property type="match status" value="1"/>
</dbReference>
<dbReference type="Gene3D" id="3.30.1490.20">
    <property type="entry name" value="ATP-grasp fold, A domain"/>
    <property type="match status" value="1"/>
</dbReference>
<dbReference type="Gene3D" id="3.30.470.20">
    <property type="entry name" value="ATP-grasp fold, B domain"/>
    <property type="match status" value="1"/>
</dbReference>
<dbReference type="Gene3D" id="3.20.20.60">
    <property type="entry name" value="Phosphoenolpyruvate-binding domains"/>
    <property type="match status" value="1"/>
</dbReference>
<dbReference type="Gene3D" id="3.50.30.10">
    <property type="entry name" value="Phosphohistidine domain"/>
    <property type="match status" value="1"/>
</dbReference>
<dbReference type="InterPro" id="IPR013815">
    <property type="entry name" value="ATP_grasp_subdomain_1"/>
</dbReference>
<dbReference type="InterPro" id="IPR008279">
    <property type="entry name" value="PEP-util_enz_mobile_dom"/>
</dbReference>
<dbReference type="InterPro" id="IPR006319">
    <property type="entry name" value="PEP_synth"/>
</dbReference>
<dbReference type="InterPro" id="IPR018274">
    <property type="entry name" value="PEP_util_AS"/>
</dbReference>
<dbReference type="InterPro" id="IPR000121">
    <property type="entry name" value="PEP_util_C"/>
</dbReference>
<dbReference type="InterPro" id="IPR036637">
    <property type="entry name" value="Phosphohistidine_dom_sf"/>
</dbReference>
<dbReference type="InterPro" id="IPR002192">
    <property type="entry name" value="PPDK_AMP/ATP-bd"/>
</dbReference>
<dbReference type="InterPro" id="IPR015813">
    <property type="entry name" value="Pyrv/PenolPyrv_kinase-like_dom"/>
</dbReference>
<dbReference type="InterPro" id="IPR040442">
    <property type="entry name" value="Pyrv_kinase-like_dom_sf"/>
</dbReference>
<dbReference type="NCBIfam" id="TIGR01418">
    <property type="entry name" value="PEP_synth"/>
    <property type="match status" value="1"/>
</dbReference>
<dbReference type="NCBIfam" id="NF005057">
    <property type="entry name" value="PRK06464.1"/>
    <property type="match status" value="1"/>
</dbReference>
<dbReference type="PANTHER" id="PTHR43030">
    <property type="entry name" value="PHOSPHOENOLPYRUVATE SYNTHASE"/>
    <property type="match status" value="1"/>
</dbReference>
<dbReference type="PANTHER" id="PTHR43030:SF1">
    <property type="entry name" value="PHOSPHOENOLPYRUVATE SYNTHASE"/>
    <property type="match status" value="1"/>
</dbReference>
<dbReference type="Pfam" id="PF00391">
    <property type="entry name" value="PEP-utilizers"/>
    <property type="match status" value="1"/>
</dbReference>
<dbReference type="Pfam" id="PF02896">
    <property type="entry name" value="PEP-utilizers_C"/>
    <property type="match status" value="1"/>
</dbReference>
<dbReference type="Pfam" id="PF01326">
    <property type="entry name" value="PPDK_N"/>
    <property type="match status" value="1"/>
</dbReference>
<dbReference type="SUPFAM" id="SSF56059">
    <property type="entry name" value="Glutathione synthetase ATP-binding domain-like"/>
    <property type="match status" value="1"/>
</dbReference>
<dbReference type="SUPFAM" id="SSF51621">
    <property type="entry name" value="Phosphoenolpyruvate/pyruvate domain"/>
    <property type="match status" value="1"/>
</dbReference>
<dbReference type="SUPFAM" id="SSF52009">
    <property type="entry name" value="Phosphohistidine domain"/>
    <property type="match status" value="1"/>
</dbReference>
<dbReference type="PROSITE" id="PS00370">
    <property type="entry name" value="PEP_ENZYMES_PHOS_SITE"/>
    <property type="match status" value="1"/>
</dbReference>
<evidence type="ECO:0000250" key="1"/>
<evidence type="ECO:0000305" key="2"/>
<organism>
    <name type="scientific">Methanothermobacter thermautotrophicus (strain ATCC 29096 / DSM 1053 / JCM 10044 / NBRC 100330 / Delta H)</name>
    <name type="common">Methanobacterium thermoautotrophicum</name>
    <dbReference type="NCBI Taxonomy" id="187420"/>
    <lineage>
        <taxon>Archaea</taxon>
        <taxon>Methanobacteriati</taxon>
        <taxon>Methanobacteriota</taxon>
        <taxon>Methanomada group</taxon>
        <taxon>Methanobacteria</taxon>
        <taxon>Methanobacteriales</taxon>
        <taxon>Methanobacteriaceae</taxon>
        <taxon>Methanothermobacter</taxon>
    </lineage>
</organism>
<sequence length="684" mass="75619">MTGARNWLNKPLIFFKFNNHHTASPGDKMVKYVAFFEELGKDDVGIAGGKGANLGELTQAGIPVPPGFVVTAATYDKFMTDTGLQPVVMEMLENLDVNDTKELQRVSAEIKDIITSTEVPEDIQTLIIESYNALCQRIGKDDVYVAIRSSATAEDLPEASFAGQQDTFLNIRGAEDVLDYVRRCWASLFEARAIFYREENNFDHSKVYIAVVVQEMVDAEKAGVMFTVHPSTGEDRILIEGSWGLGEAVVSGSVTPDTYWVDKGTGKLLEFTVGEKNIMFTREDGRTVKKEVPPELRNKRVLSDGEIAALAEMGRRIQDHYGSPQDTEWAIMDGDVYMLQSRPITTLGEATEETEVKSREILVKGLGASPGLASGRVKIIREIHELDKIQIGDILVTVMTTPDMVPAMKRASGIITDEGGVTCHAAIVSRELGIPCVVGTGNATEVLKENQVVSIDGNRGLVYEGSVIEGEKKEAEAETVTVESPLLTVTEVKVNVSMPEAARKAAATGADGVGLLRTEHMMLTTGVHPRKFIEEGREDELVNTLAENILKVADEFYPRPVWYRTLDAPTDEFKTLEGGENEPYEHNPMLGWRGIRRELDEPEILRAEFRAIKKLHEQGYTNIGIMIPLVQHPDELRKAKMIAEEAGLKPHRDVEFGIMVETPAAALIIEDFIEEGIDFVRLEP</sequence>
<name>PPSA_METTH</name>
<feature type="chain" id="PRO_0000147042" description="Probable phosphoenolpyruvate synthase">
    <location>
        <begin position="1"/>
        <end position="684"/>
    </location>
</feature>
<feature type="active site" description="Tele-phosphohistidine intermediate" evidence="1">
    <location>
        <position position="424"/>
    </location>
</feature>
<feature type="binding site" evidence="1">
    <location>
        <position position="517"/>
    </location>
    <ligand>
        <name>substrate</name>
    </ligand>
</feature>
<feature type="binding site" evidence="1">
    <location>
        <position position="564"/>
    </location>
    <ligand>
        <name>substrate</name>
    </ligand>
</feature>
<feature type="binding site" evidence="1">
    <location>
        <position position="661"/>
    </location>
    <ligand>
        <name>Mg(2+)</name>
        <dbReference type="ChEBI" id="CHEBI:18420"/>
    </ligand>
</feature>
<feature type="binding site" evidence="1">
    <location>
        <position position="661"/>
    </location>
    <ligand>
        <name>substrate</name>
    </ligand>
</feature>
<comment type="function">
    <text evidence="1">Catalyzes the phosphorylation of pyruvate to phosphoenolpyruvate.</text>
</comment>
<comment type="catalytic activity">
    <reaction>
        <text>pyruvate + ATP + H2O = phosphoenolpyruvate + AMP + phosphate + 2 H(+)</text>
        <dbReference type="Rhea" id="RHEA:11364"/>
        <dbReference type="ChEBI" id="CHEBI:15361"/>
        <dbReference type="ChEBI" id="CHEBI:15377"/>
        <dbReference type="ChEBI" id="CHEBI:15378"/>
        <dbReference type="ChEBI" id="CHEBI:30616"/>
        <dbReference type="ChEBI" id="CHEBI:43474"/>
        <dbReference type="ChEBI" id="CHEBI:58702"/>
        <dbReference type="ChEBI" id="CHEBI:456215"/>
        <dbReference type="EC" id="2.7.9.2"/>
    </reaction>
</comment>
<comment type="cofactor">
    <cofactor evidence="1">
        <name>Mg(2+)</name>
        <dbReference type="ChEBI" id="CHEBI:18420"/>
    </cofactor>
</comment>
<comment type="pathway">
    <text>Carbohydrate biosynthesis; gluconeogenesis.</text>
</comment>
<comment type="domain">
    <text evidence="1">The N-terminal domain contains the ATP/Pi binding site, the central domain the pyrophosphate/phosphate carrier histidine, and the C-terminal domain the pyruvate binding site.</text>
</comment>
<comment type="miscellaneous">
    <text evidence="1">The reaction takes place in three steps, mediated by a phosphocarrier histidine residue located on the surface of the central domain. The two first partial reactions are catalyzed at an active site located on the N-terminal domain, and the third partial reaction is catalyzed at an active site located on the C-terminal domain. For catalytic turnover, the central domain swivels from the concave surface of the N-terminal domain to that of the C-terminal domain (By similarity).</text>
</comment>
<comment type="similarity">
    <text evidence="2">Belongs to the PEP-utilizing enzyme family.</text>
</comment>
<comment type="caution">
    <text evidence="2">Lacks some of the catalytic-important sites due to premature sequence termination compared to the close ortholog in M.jannaschii. The missing 250 amino acids or so may be retrieved through a serie of sequence corrections.</text>
</comment>
<gene>
    <name type="primary">ppsA</name>
    <name type="ordered locus">MTH_1118</name>
</gene>
<keyword id="KW-0067">ATP-binding</keyword>
<keyword id="KW-0418">Kinase</keyword>
<keyword id="KW-0460">Magnesium</keyword>
<keyword id="KW-0479">Metal-binding</keyword>
<keyword id="KW-0547">Nucleotide-binding</keyword>
<keyword id="KW-1185">Reference proteome</keyword>
<keyword id="KW-0808">Transferase</keyword>